<protein>
    <recommendedName>
        <fullName>NADH-cytochrome b5 reductase 2</fullName>
        <shortName>b5R.2</shortName>
        <ecNumber>1.6.2.2</ecNumber>
    </recommendedName>
</protein>
<organism>
    <name type="scientific">Xenopus laevis</name>
    <name type="common">African clawed frog</name>
    <dbReference type="NCBI Taxonomy" id="8355"/>
    <lineage>
        <taxon>Eukaryota</taxon>
        <taxon>Metazoa</taxon>
        <taxon>Chordata</taxon>
        <taxon>Craniata</taxon>
        <taxon>Vertebrata</taxon>
        <taxon>Euteleostomi</taxon>
        <taxon>Amphibia</taxon>
        <taxon>Batrachia</taxon>
        <taxon>Anura</taxon>
        <taxon>Pipoidea</taxon>
        <taxon>Pipidae</taxon>
        <taxon>Xenopodinae</taxon>
        <taxon>Xenopus</taxon>
        <taxon>Xenopus</taxon>
    </lineage>
</organism>
<keyword id="KW-0274">FAD</keyword>
<keyword id="KW-0285">Flavoprotein</keyword>
<keyword id="KW-0444">Lipid biosynthesis</keyword>
<keyword id="KW-0443">Lipid metabolism</keyword>
<keyword id="KW-0472">Membrane</keyword>
<keyword id="KW-0520">NAD</keyword>
<keyword id="KW-0560">Oxidoreductase</keyword>
<keyword id="KW-1185">Reference proteome</keyword>
<keyword id="KW-0752">Steroid biosynthesis</keyword>
<keyword id="KW-0753">Steroid metabolism</keyword>
<keyword id="KW-0756">Sterol biosynthesis</keyword>
<keyword id="KW-1207">Sterol metabolism</keyword>
<keyword id="KW-0812">Transmembrane</keyword>
<keyword id="KW-1133">Transmembrane helix</keyword>
<accession>Q5PQA4</accession>
<evidence type="ECO:0000250" key="1"/>
<evidence type="ECO:0000255" key="2"/>
<evidence type="ECO:0000255" key="3">
    <source>
        <dbReference type="PROSITE-ProRule" id="PRU00716"/>
    </source>
</evidence>
<evidence type="ECO:0000305" key="4"/>
<name>NB5R2_XENLA</name>
<feature type="chain" id="PRO_0000287553" description="NADH-cytochrome b5 reductase 2">
    <location>
        <begin position="1"/>
        <end position="296"/>
    </location>
</feature>
<feature type="transmembrane region" description="Helical" evidence="2">
    <location>
        <begin position="2"/>
        <end position="24"/>
    </location>
</feature>
<feature type="domain" description="FAD-binding FR-type" evidence="3">
    <location>
        <begin position="35"/>
        <end position="147"/>
    </location>
</feature>
<feature type="binding site" evidence="1">
    <location>
        <begin position="127"/>
        <end position="142"/>
    </location>
    <ligand>
        <name>FAD</name>
        <dbReference type="ChEBI" id="CHEBI:57692"/>
    </ligand>
</feature>
<feature type="binding site" evidence="1">
    <location>
        <begin position="166"/>
        <end position="201"/>
    </location>
    <ligand>
        <name>FAD</name>
        <dbReference type="ChEBI" id="CHEBI:57692"/>
    </ligand>
</feature>
<reference key="1">
    <citation type="submission" date="2004-12" db="EMBL/GenBank/DDBJ databases">
        <authorList>
            <consortium name="NIH - Xenopus Gene Collection (XGC) project"/>
        </authorList>
    </citation>
    <scope>NUCLEOTIDE SEQUENCE [LARGE SCALE MRNA]</scope>
    <source>
        <tissue>Testis</tissue>
    </source>
</reference>
<sequence>MLVALAAIGVTVLLFLIKALGSGAKKAPVTLLDPNAKYPLPLIEKQEISHDTKKFRFGLPSAEHVLGLPVGQHIYLSAKVNGSLVVRAYTPVSSDEVKGHVDLVVKVYYKNVNPKFPDGGKMSQHLDSLKIGETIDFRGPNGLLVYKGKGKFAIRPDKKAEPKIKVAKHVGMLAGGTGITPMLQLIRQITQDPNDNTKCYLIFANQTEDDILLRYELETVAKSHPEQFKLWYTLDRPPQGWKYGSGFVTADMIKEHLPPPSEDVLVLMCGPPPMIQFACQDNLTKLGYPEAGRFAY</sequence>
<proteinExistence type="evidence at transcript level"/>
<comment type="function">
    <text evidence="1">NADH-cytochrome b5 reductases are involved in desaturation and elongation of fatty acids, cholesterol biosynthesis and drug metabolism.</text>
</comment>
<comment type="catalytic activity">
    <reaction>
        <text>2 Fe(III)-[cytochrome b5] + NADH = 2 Fe(II)-[cytochrome b5] + NAD(+) + H(+)</text>
        <dbReference type="Rhea" id="RHEA:46680"/>
        <dbReference type="Rhea" id="RHEA-COMP:10438"/>
        <dbReference type="Rhea" id="RHEA-COMP:10439"/>
        <dbReference type="ChEBI" id="CHEBI:15378"/>
        <dbReference type="ChEBI" id="CHEBI:29033"/>
        <dbReference type="ChEBI" id="CHEBI:29034"/>
        <dbReference type="ChEBI" id="CHEBI:57540"/>
        <dbReference type="ChEBI" id="CHEBI:57945"/>
        <dbReference type="EC" id="1.6.2.2"/>
    </reaction>
</comment>
<comment type="cofactor">
    <cofactor evidence="1">
        <name>FAD</name>
        <dbReference type="ChEBI" id="CHEBI:57692"/>
    </cofactor>
</comment>
<comment type="subcellular location">
    <subcellularLocation>
        <location evidence="4">Membrane</location>
        <topology evidence="4">Single-pass membrane protein</topology>
    </subcellularLocation>
</comment>
<comment type="similarity">
    <text evidence="4">Belongs to the flavoprotein pyridine nucleotide cytochrome reductase family.</text>
</comment>
<dbReference type="EC" id="1.6.2.2"/>
<dbReference type="EMBL" id="BC087294">
    <property type="protein sequence ID" value="AAH87294.1"/>
    <property type="molecule type" value="mRNA"/>
</dbReference>
<dbReference type="RefSeq" id="NP_001088670.1">
    <property type="nucleotide sequence ID" value="NM_001095201.1"/>
</dbReference>
<dbReference type="SMR" id="Q5PQA4"/>
<dbReference type="DNASU" id="495932"/>
<dbReference type="GeneID" id="495932"/>
<dbReference type="KEGG" id="xla:495932"/>
<dbReference type="AGR" id="Xenbase:XB-GENE-1006047"/>
<dbReference type="CTD" id="495932"/>
<dbReference type="Xenbase" id="XB-GENE-1006047">
    <property type="gene designation" value="cyb5r2.S"/>
</dbReference>
<dbReference type="OrthoDB" id="432685at2759"/>
<dbReference type="Proteomes" id="UP000186698">
    <property type="component" value="Chromosome 4S"/>
</dbReference>
<dbReference type="Bgee" id="495932">
    <property type="expression patterns" value="Expressed in liver and 14 other cell types or tissues"/>
</dbReference>
<dbReference type="GO" id="GO:0016020">
    <property type="term" value="C:membrane"/>
    <property type="evidence" value="ECO:0007669"/>
    <property type="project" value="UniProtKB-SubCell"/>
</dbReference>
<dbReference type="GO" id="GO:0005739">
    <property type="term" value="C:mitochondrion"/>
    <property type="evidence" value="ECO:0000318"/>
    <property type="project" value="GO_Central"/>
</dbReference>
<dbReference type="GO" id="GO:0004128">
    <property type="term" value="F:cytochrome-b5 reductase activity, acting on NAD(P)H"/>
    <property type="evidence" value="ECO:0007669"/>
    <property type="project" value="UniProtKB-EC"/>
</dbReference>
<dbReference type="GO" id="GO:0071949">
    <property type="term" value="F:FAD binding"/>
    <property type="evidence" value="ECO:0000318"/>
    <property type="project" value="GO_Central"/>
</dbReference>
<dbReference type="GO" id="GO:0016126">
    <property type="term" value="P:sterol biosynthetic process"/>
    <property type="evidence" value="ECO:0007669"/>
    <property type="project" value="UniProtKB-KW"/>
</dbReference>
<dbReference type="CDD" id="cd06183">
    <property type="entry name" value="cyt_b5_reduct_like"/>
    <property type="match status" value="1"/>
</dbReference>
<dbReference type="FunFam" id="2.40.30.10:FF:000021">
    <property type="entry name" value="NADH-cytochrome b5 reductase"/>
    <property type="match status" value="1"/>
</dbReference>
<dbReference type="FunFam" id="3.40.50.80:FF:000005">
    <property type="entry name" value="NADH-cytochrome b5 reductase"/>
    <property type="match status" value="1"/>
</dbReference>
<dbReference type="Gene3D" id="3.40.50.80">
    <property type="entry name" value="Nucleotide-binding domain of ferredoxin-NADP reductase (FNR) module"/>
    <property type="match status" value="1"/>
</dbReference>
<dbReference type="Gene3D" id="2.40.30.10">
    <property type="entry name" value="Translation factors"/>
    <property type="match status" value="1"/>
</dbReference>
<dbReference type="InterPro" id="IPR001834">
    <property type="entry name" value="CBR-like"/>
</dbReference>
<dbReference type="InterPro" id="IPR008333">
    <property type="entry name" value="Cbr1-like_FAD-bd_dom"/>
</dbReference>
<dbReference type="InterPro" id="IPR017927">
    <property type="entry name" value="FAD-bd_FR_type"/>
</dbReference>
<dbReference type="InterPro" id="IPR001709">
    <property type="entry name" value="Flavoprot_Pyr_Nucl_cyt_Rdtase"/>
</dbReference>
<dbReference type="InterPro" id="IPR039261">
    <property type="entry name" value="FNR_nucleotide-bd"/>
</dbReference>
<dbReference type="InterPro" id="IPR001433">
    <property type="entry name" value="OxRdtase_FAD/NAD-bd"/>
</dbReference>
<dbReference type="InterPro" id="IPR017938">
    <property type="entry name" value="Riboflavin_synthase-like_b-brl"/>
</dbReference>
<dbReference type="PANTHER" id="PTHR19370">
    <property type="entry name" value="NADH-CYTOCHROME B5 REDUCTASE"/>
    <property type="match status" value="1"/>
</dbReference>
<dbReference type="PANTHER" id="PTHR19370:SF108">
    <property type="entry name" value="NADH-CYTOCHROME B5 REDUCTASE 2"/>
    <property type="match status" value="1"/>
</dbReference>
<dbReference type="Pfam" id="PF00970">
    <property type="entry name" value="FAD_binding_6"/>
    <property type="match status" value="1"/>
</dbReference>
<dbReference type="Pfam" id="PF00175">
    <property type="entry name" value="NAD_binding_1"/>
    <property type="match status" value="1"/>
</dbReference>
<dbReference type="PRINTS" id="PR00406">
    <property type="entry name" value="CYTB5RDTASE"/>
</dbReference>
<dbReference type="PRINTS" id="PR00371">
    <property type="entry name" value="FPNCR"/>
</dbReference>
<dbReference type="SUPFAM" id="SSF52343">
    <property type="entry name" value="Ferredoxin reductase-like, C-terminal NADP-linked domain"/>
    <property type="match status" value="1"/>
</dbReference>
<dbReference type="SUPFAM" id="SSF63380">
    <property type="entry name" value="Riboflavin synthase domain-like"/>
    <property type="match status" value="1"/>
</dbReference>
<dbReference type="PROSITE" id="PS51384">
    <property type="entry name" value="FAD_FR"/>
    <property type="match status" value="1"/>
</dbReference>
<gene>
    <name type="primary">cyb5r2</name>
</gene>